<feature type="chain" id="PRO_0000208401" description="Acetyl-coenzyme A synthetase">
    <location>
        <begin position="1"/>
        <end position="672"/>
    </location>
</feature>
<feature type="binding site" evidence="1">
    <location>
        <begin position="217"/>
        <end position="220"/>
    </location>
    <ligand>
        <name>CoA</name>
        <dbReference type="ChEBI" id="CHEBI:57287"/>
    </ligand>
</feature>
<feature type="binding site" evidence="1">
    <location>
        <position position="335"/>
    </location>
    <ligand>
        <name>CoA</name>
        <dbReference type="ChEBI" id="CHEBI:57287"/>
    </ligand>
</feature>
<feature type="binding site" evidence="1">
    <location>
        <begin position="411"/>
        <end position="413"/>
    </location>
    <ligand>
        <name>ATP</name>
        <dbReference type="ChEBI" id="CHEBI:30616"/>
    </ligand>
</feature>
<feature type="binding site" evidence="1">
    <location>
        <begin position="435"/>
        <end position="440"/>
    </location>
    <ligand>
        <name>ATP</name>
        <dbReference type="ChEBI" id="CHEBI:30616"/>
    </ligand>
</feature>
<feature type="binding site" evidence="1">
    <location>
        <position position="529"/>
    </location>
    <ligand>
        <name>ATP</name>
        <dbReference type="ChEBI" id="CHEBI:30616"/>
    </ligand>
</feature>
<feature type="binding site" evidence="1">
    <location>
        <position position="544"/>
    </location>
    <ligand>
        <name>ATP</name>
        <dbReference type="ChEBI" id="CHEBI:30616"/>
    </ligand>
</feature>
<feature type="binding site" evidence="1">
    <location>
        <position position="555"/>
    </location>
    <ligand>
        <name>ATP</name>
        <dbReference type="ChEBI" id="CHEBI:30616"/>
    </ligand>
</feature>
<feature type="binding site" evidence="1">
    <location>
        <position position="566"/>
    </location>
    <ligand>
        <name>Mg(2+)</name>
        <dbReference type="ChEBI" id="CHEBI:18420"/>
    </ligand>
</feature>
<feature type="binding site" evidence="1">
    <location>
        <position position="568"/>
    </location>
    <ligand>
        <name>Mg(2+)</name>
        <dbReference type="ChEBI" id="CHEBI:18420"/>
    </ligand>
</feature>
<feature type="binding site" evidence="1">
    <location>
        <position position="571"/>
    </location>
    <ligand>
        <name>Mg(2+)</name>
        <dbReference type="ChEBI" id="CHEBI:18420"/>
    </ligand>
</feature>
<feature type="binding site" evidence="1">
    <location>
        <position position="613"/>
    </location>
    <ligand>
        <name>CoA</name>
        <dbReference type="ChEBI" id="CHEBI:57287"/>
    </ligand>
</feature>
<feature type="modified residue" description="N6-acetyllysine" evidence="1">
    <location>
        <position position="638"/>
    </location>
</feature>
<reference key="1">
    <citation type="journal article" date="1991" name="J. Bacteriol.">
        <title>Cloning, sequence analysis, and functional expression of the acetyl coenzyme A synthetase gene from Methanothrix soehngenii in Escherichia coli.</title>
        <authorList>
            <person name="Eggen R.I.L."/>
            <person name="Geerling A.C.M."/>
            <person name="Boshoven A.B.P."/>
            <person name="de Vos W.M."/>
        </authorList>
    </citation>
    <scope>NUCLEOTIDE SEQUENCE [GENOMIC DNA]</scope>
    <source>
        <strain>Opfikon / DSM 2139</strain>
    </source>
</reference>
<reference key="2">
    <citation type="journal article" date="1989" name="J. Bacteriol.">
        <title>Isolation and characterization of acetyl-coenzyme A synthetase from Methanothrix soehngenii.</title>
        <authorList>
            <person name="Jetten M.S."/>
            <person name="Stams A.J."/>
            <person name="Zehnder A.J."/>
        </authorList>
    </citation>
    <scope>CHARACTERIZATION</scope>
</reference>
<organism>
    <name type="scientific">Methanothrix soehngenii</name>
    <name type="common">Methanosaeta concilii</name>
    <dbReference type="NCBI Taxonomy" id="2223"/>
    <lineage>
        <taxon>Archaea</taxon>
        <taxon>Methanobacteriati</taxon>
        <taxon>Methanobacteriota</taxon>
        <taxon>Stenosarchaea group</taxon>
        <taxon>Methanomicrobia</taxon>
        <taxon>Methanotrichales</taxon>
        <taxon>Methanotrichaceae</taxon>
        <taxon>Methanothrix</taxon>
    </lineage>
</organism>
<accession>P27095</accession>
<evidence type="ECO:0000255" key="1">
    <source>
        <dbReference type="HAMAP-Rule" id="MF_01123"/>
    </source>
</evidence>
<dbReference type="EC" id="6.2.1.1" evidence="1"/>
<dbReference type="EMBL" id="M63968">
    <property type="protein sequence ID" value="AAA73007.1"/>
    <property type="molecule type" value="Genomic_DNA"/>
</dbReference>
<dbReference type="PIR" id="A41043">
    <property type="entry name" value="A41043"/>
</dbReference>
<dbReference type="SMR" id="P27095"/>
<dbReference type="GO" id="GO:0003987">
    <property type="term" value="F:acetate-CoA ligase activity"/>
    <property type="evidence" value="ECO:0007669"/>
    <property type="project" value="UniProtKB-UniRule"/>
</dbReference>
<dbReference type="GO" id="GO:0016208">
    <property type="term" value="F:AMP binding"/>
    <property type="evidence" value="ECO:0007669"/>
    <property type="project" value="InterPro"/>
</dbReference>
<dbReference type="GO" id="GO:0005524">
    <property type="term" value="F:ATP binding"/>
    <property type="evidence" value="ECO:0007669"/>
    <property type="project" value="UniProtKB-KW"/>
</dbReference>
<dbReference type="GO" id="GO:0046872">
    <property type="term" value="F:metal ion binding"/>
    <property type="evidence" value="ECO:0007669"/>
    <property type="project" value="UniProtKB-KW"/>
</dbReference>
<dbReference type="GO" id="GO:0019427">
    <property type="term" value="P:acetyl-CoA biosynthetic process from acetate"/>
    <property type="evidence" value="ECO:0007669"/>
    <property type="project" value="InterPro"/>
</dbReference>
<dbReference type="CDD" id="cd05966">
    <property type="entry name" value="ACS"/>
    <property type="match status" value="1"/>
</dbReference>
<dbReference type="FunFam" id="3.40.50.12780:FF:000001">
    <property type="entry name" value="Acetyl-coenzyme A synthetase"/>
    <property type="match status" value="1"/>
</dbReference>
<dbReference type="Gene3D" id="3.30.300.30">
    <property type="match status" value="1"/>
</dbReference>
<dbReference type="Gene3D" id="3.40.50.12780">
    <property type="entry name" value="N-terminal domain of ligase-like"/>
    <property type="match status" value="1"/>
</dbReference>
<dbReference type="HAMAP" id="MF_01123">
    <property type="entry name" value="Ac_CoA_synth"/>
    <property type="match status" value="1"/>
</dbReference>
<dbReference type="InterPro" id="IPR011904">
    <property type="entry name" value="Ac_CoA_lig"/>
</dbReference>
<dbReference type="InterPro" id="IPR032387">
    <property type="entry name" value="ACAS_N"/>
</dbReference>
<dbReference type="InterPro" id="IPR025110">
    <property type="entry name" value="AMP-bd_C"/>
</dbReference>
<dbReference type="InterPro" id="IPR045851">
    <property type="entry name" value="AMP-bd_C_sf"/>
</dbReference>
<dbReference type="InterPro" id="IPR020845">
    <property type="entry name" value="AMP-binding_CS"/>
</dbReference>
<dbReference type="InterPro" id="IPR000873">
    <property type="entry name" value="AMP-dep_synth/lig_dom"/>
</dbReference>
<dbReference type="InterPro" id="IPR042099">
    <property type="entry name" value="ANL_N_sf"/>
</dbReference>
<dbReference type="NCBIfam" id="TIGR02188">
    <property type="entry name" value="Ac_CoA_lig_AcsA"/>
    <property type="match status" value="1"/>
</dbReference>
<dbReference type="NCBIfam" id="NF001208">
    <property type="entry name" value="PRK00174.1"/>
    <property type="match status" value="1"/>
</dbReference>
<dbReference type="PANTHER" id="PTHR24095">
    <property type="entry name" value="ACETYL-COENZYME A SYNTHETASE"/>
    <property type="match status" value="1"/>
</dbReference>
<dbReference type="PANTHER" id="PTHR24095:SF14">
    <property type="entry name" value="ACETYL-COENZYME A SYNTHETASE 1"/>
    <property type="match status" value="1"/>
</dbReference>
<dbReference type="Pfam" id="PF16177">
    <property type="entry name" value="ACAS_N"/>
    <property type="match status" value="1"/>
</dbReference>
<dbReference type="Pfam" id="PF00501">
    <property type="entry name" value="AMP-binding"/>
    <property type="match status" value="1"/>
</dbReference>
<dbReference type="Pfam" id="PF13193">
    <property type="entry name" value="AMP-binding_C"/>
    <property type="match status" value="1"/>
</dbReference>
<dbReference type="SUPFAM" id="SSF56801">
    <property type="entry name" value="Acetyl-CoA synthetase-like"/>
    <property type="match status" value="1"/>
</dbReference>
<dbReference type="PROSITE" id="PS00455">
    <property type="entry name" value="AMP_BINDING"/>
    <property type="match status" value="1"/>
</dbReference>
<sequence length="672" mass="75527">MLKLAGKEDKKLKTTVFQDETRIFNPPKELVEKSIVMQWMKKKGFKTEKEMRAWCSSDEHYLEFWDEMAKTYVDWHKPYTKVMDDSEMPYFHWFTGGEINITYNAVDRHAKGAKKDKVAYIWIPEPTDQPVQKITYGDLYKEVNKFANGLKSLGLKKGDRVSIYMPMIPQLPIAMLACAKLGVSHIVVFSGFSSKGLMDRAAHCGSRAIITVDGFYRRGKPVPLKPNADEAAGGAPSVEKIIVYKRAGVDVSMKEGRDVWWHDLVKGQSEECEPVWVDPEHRLYILYTSGTTGKPKGIEHATGGNAVGPAQTLHWVFDLKDDDVWWCTADIGWVTGHSYIVYAPLILGMTSLMYEGAADYPDFGRWWKNIQDHKVTVLYTAPTAVRMFMKQGAEWPDKYDLSSLRLLGSVGEPINPEAWMWYREHIGRGELQIMDTWWQTETGTFLNSPLPITPLKPGSCTFPLPGYDISILDEEGNEVPLGSGGNIVALKPYPSMLRAFWGDKERFMKEYWQFYWDVPGRRGVYLAGDKAQRDKDGYFFIQGRIDDVLSVAGHRIANAEVESALVAHPKIAEAAVVGKPDEVKGESIVAFVILRVGNEPSPELAKDAIAFVRKTLGPVAAPTEVHFVNDLPKTRSGKIMRRVVKARALGNPVGDISTLMNPEAVDGIPKIV</sequence>
<gene>
    <name evidence="1" type="primary">acsA</name>
    <name type="synonym">acs</name>
</gene>
<name>ACSA_METSH</name>
<keyword id="KW-0007">Acetylation</keyword>
<keyword id="KW-0067">ATP-binding</keyword>
<keyword id="KW-0436">Ligase</keyword>
<keyword id="KW-0460">Magnesium</keyword>
<keyword id="KW-0479">Metal-binding</keyword>
<keyword id="KW-0547">Nucleotide-binding</keyword>
<proteinExistence type="evidence at protein level"/>
<comment type="function">
    <text evidence="1">Catalyzes the conversion of acetate into acetyl-CoA (AcCoA), an essential intermediate at the junction of anabolic and catabolic pathways. AcsA undergoes a two-step reaction. In the first half reaction, AcsA combines acetate with ATP to form acetyl-adenylate (AcAMP) intermediate. In the second half reaction, it can then transfer the acetyl group from AcAMP to the sulfhydryl group of CoA, forming the product AcCoA.</text>
</comment>
<comment type="catalytic activity">
    <reaction evidence="1">
        <text>acetate + ATP + CoA = acetyl-CoA + AMP + diphosphate</text>
        <dbReference type="Rhea" id="RHEA:23176"/>
        <dbReference type="ChEBI" id="CHEBI:30089"/>
        <dbReference type="ChEBI" id="CHEBI:30616"/>
        <dbReference type="ChEBI" id="CHEBI:33019"/>
        <dbReference type="ChEBI" id="CHEBI:57287"/>
        <dbReference type="ChEBI" id="CHEBI:57288"/>
        <dbReference type="ChEBI" id="CHEBI:456215"/>
        <dbReference type="EC" id="6.2.1.1"/>
    </reaction>
</comment>
<comment type="cofactor">
    <cofactor evidence="1">
        <name>Mg(2+)</name>
        <dbReference type="ChEBI" id="CHEBI:18420"/>
    </cofactor>
</comment>
<comment type="PTM">
    <text evidence="1">Acetylated. Deacetylation by the SIR2-homolog deacetylase activates the enzyme.</text>
</comment>
<comment type="PTM">
    <text>The N-terminus is blocked.</text>
</comment>
<comment type="similarity">
    <text evidence="1">Belongs to the ATP-dependent AMP-binding enzyme family.</text>
</comment>
<protein>
    <recommendedName>
        <fullName evidence="1">Acetyl-coenzyme A synthetase</fullName>
        <shortName evidence="1">AcCoA synthetase</shortName>
        <shortName evidence="1">Acs</shortName>
        <ecNumber evidence="1">6.2.1.1</ecNumber>
    </recommendedName>
    <alternativeName>
        <fullName evidence="1">Acetate--CoA ligase</fullName>
    </alternativeName>
    <alternativeName>
        <fullName evidence="1">Acyl-activating enzyme</fullName>
    </alternativeName>
</protein>